<gene>
    <name type="primary">Lrrc3</name>
</gene>
<dbReference type="EMBL" id="AB086432">
    <property type="protein sequence ID" value="BAC00923.1"/>
    <property type="molecule type" value="mRNA"/>
</dbReference>
<dbReference type="RefSeq" id="NP_663712.1">
    <property type="nucleotide sequence ID" value="NM_145679.2"/>
</dbReference>
<dbReference type="RefSeq" id="XP_006256302.1">
    <property type="nucleotide sequence ID" value="XM_006256240.2"/>
</dbReference>
<dbReference type="RefSeq" id="XP_017457030.1">
    <property type="nucleotide sequence ID" value="XM_017601541.1"/>
</dbReference>
<dbReference type="SMR" id="P59035"/>
<dbReference type="FunCoup" id="P59035">
    <property type="interactions" value="94"/>
</dbReference>
<dbReference type="STRING" id="10116.ENSRNOP00000001632"/>
<dbReference type="PhosphoSitePlus" id="P59035"/>
<dbReference type="PaxDb" id="10116-ENSRNOP00000001632"/>
<dbReference type="Ensembl" id="ENSRNOT00000001632.4">
    <property type="protein sequence ID" value="ENSRNOP00000001632.2"/>
    <property type="gene ID" value="ENSRNOG00000001217.4"/>
</dbReference>
<dbReference type="GeneID" id="246773"/>
<dbReference type="KEGG" id="rno:246773"/>
<dbReference type="UCSC" id="RGD:628861">
    <property type="organism name" value="rat"/>
</dbReference>
<dbReference type="AGR" id="RGD:628861"/>
<dbReference type="CTD" id="81543"/>
<dbReference type="RGD" id="628861">
    <property type="gene designation" value="Lrrc3"/>
</dbReference>
<dbReference type="eggNOG" id="KOG4237">
    <property type="taxonomic scope" value="Eukaryota"/>
</dbReference>
<dbReference type="GeneTree" id="ENSGT00940000154360"/>
<dbReference type="HOGENOM" id="CLU_064640_0_0_1"/>
<dbReference type="InParanoid" id="P59035"/>
<dbReference type="OMA" id="QCPDHAG"/>
<dbReference type="OrthoDB" id="6343311at2759"/>
<dbReference type="PhylomeDB" id="P59035"/>
<dbReference type="TreeFam" id="TF327070"/>
<dbReference type="PRO" id="PR:P59035"/>
<dbReference type="Proteomes" id="UP000002494">
    <property type="component" value="Chromosome 20"/>
</dbReference>
<dbReference type="Bgee" id="ENSRNOG00000001217">
    <property type="expression patterns" value="Expressed in heart and 15 other cell types or tissues"/>
</dbReference>
<dbReference type="GO" id="GO:0005886">
    <property type="term" value="C:plasma membrane"/>
    <property type="evidence" value="ECO:0000318"/>
    <property type="project" value="GO_Central"/>
</dbReference>
<dbReference type="FunFam" id="3.80.10.10:FF:000069">
    <property type="entry name" value="leucine-rich repeat-containing protein 3B"/>
    <property type="match status" value="1"/>
</dbReference>
<dbReference type="Gene3D" id="3.80.10.10">
    <property type="entry name" value="Ribonuclease Inhibitor"/>
    <property type="match status" value="1"/>
</dbReference>
<dbReference type="InterPro" id="IPR001611">
    <property type="entry name" value="Leu-rich_rpt"/>
</dbReference>
<dbReference type="InterPro" id="IPR003591">
    <property type="entry name" value="Leu-rich_rpt_typical-subtyp"/>
</dbReference>
<dbReference type="InterPro" id="IPR032675">
    <property type="entry name" value="LRR_dom_sf"/>
</dbReference>
<dbReference type="InterPro" id="IPR050541">
    <property type="entry name" value="LRR_TM_domain-containing"/>
</dbReference>
<dbReference type="InterPro" id="IPR000372">
    <property type="entry name" value="LRRNT"/>
</dbReference>
<dbReference type="PANTHER" id="PTHR24369">
    <property type="entry name" value="ANTIGEN BSP, PUTATIVE-RELATED"/>
    <property type="match status" value="1"/>
</dbReference>
<dbReference type="PANTHER" id="PTHR24369:SF170">
    <property type="entry name" value="LEUCINE-RICH REPEAT-CONTAINING PROTEIN 3"/>
    <property type="match status" value="1"/>
</dbReference>
<dbReference type="Pfam" id="PF13855">
    <property type="entry name" value="LRR_8"/>
    <property type="match status" value="1"/>
</dbReference>
<dbReference type="Pfam" id="PF01462">
    <property type="entry name" value="LRRNT"/>
    <property type="match status" value="1"/>
</dbReference>
<dbReference type="SMART" id="SM00369">
    <property type="entry name" value="LRR_TYP"/>
    <property type="match status" value="3"/>
</dbReference>
<dbReference type="SMART" id="SM00013">
    <property type="entry name" value="LRRNT"/>
    <property type="match status" value="1"/>
</dbReference>
<dbReference type="SUPFAM" id="SSF52058">
    <property type="entry name" value="L domain-like"/>
    <property type="match status" value="1"/>
</dbReference>
<dbReference type="PROSITE" id="PS51450">
    <property type="entry name" value="LRR"/>
    <property type="match status" value="3"/>
</dbReference>
<accession>P59035</accession>
<feature type="signal peptide" evidence="1">
    <location>
        <begin position="1"/>
        <end position="32"/>
    </location>
</feature>
<feature type="chain" id="PRO_0000021620" description="Leucine-rich repeat-containing protein 3">
    <location>
        <begin position="33"/>
        <end position="257"/>
    </location>
</feature>
<feature type="transmembrane region" description="Helical" evidence="1">
    <location>
        <begin position="205"/>
        <end position="225"/>
    </location>
</feature>
<feature type="domain" description="LRRNT">
    <location>
        <begin position="33"/>
        <end position="64"/>
    </location>
</feature>
<feature type="repeat" description="LRR 1">
    <location>
        <begin position="65"/>
        <end position="86"/>
    </location>
</feature>
<feature type="repeat" description="LRR 2">
    <location>
        <begin position="89"/>
        <end position="110"/>
    </location>
</feature>
<feature type="repeat" description="LRR 3">
    <location>
        <begin position="114"/>
        <end position="135"/>
    </location>
</feature>
<feature type="domain" description="LRRCT">
    <location>
        <begin position="145"/>
        <end position="198"/>
    </location>
</feature>
<sequence>MGPRGRQSPSSPLAPSQGSCFFILFCLRLGASCPQSCQCPDHAGAVAVHCSSRGLQEIPRDIPANTVLLKLDANRISRVPNGAFQHLPQLRELDLSHNAIEAIGPAAFSGLAGGLRLLDLSHNRIRRIPKDALGKLSAKIRLSHNPLHCECALQEALWELKLDPDSVDEIACHTSAQEQFVGKPLIQVLDSGASFCSTHRKTTDVAMLVTMFGWFTMVIAYVVYYVRHNQEDARRHLEYLKSLPSAPVSKEPLSPVP</sequence>
<reference key="1">
    <citation type="submission" date="2002-06" db="EMBL/GenBank/DDBJ databases">
        <title>Rat leucine rich repeat protein LRRC3.</title>
        <authorList>
            <person name="Hahn Y."/>
            <person name="Kim S."/>
            <person name="Kim Y."/>
        </authorList>
    </citation>
    <scope>NUCLEOTIDE SEQUENCE [MRNA]</scope>
</reference>
<keyword id="KW-0433">Leucine-rich repeat</keyword>
<keyword id="KW-0472">Membrane</keyword>
<keyword id="KW-1185">Reference proteome</keyword>
<keyword id="KW-0677">Repeat</keyword>
<keyword id="KW-0732">Signal</keyword>
<keyword id="KW-0812">Transmembrane</keyword>
<keyword id="KW-1133">Transmembrane helix</keyword>
<protein>
    <recommendedName>
        <fullName>Leucine-rich repeat-containing protein 3</fullName>
    </recommendedName>
</protein>
<comment type="subcellular location">
    <subcellularLocation>
        <location evidence="2">Membrane</location>
        <topology evidence="2">Single-pass membrane protein</topology>
    </subcellularLocation>
</comment>
<comment type="similarity">
    <text evidence="2">Belongs to the LRRC3 family.</text>
</comment>
<evidence type="ECO:0000255" key="1"/>
<evidence type="ECO:0000305" key="2"/>
<name>LRRC3_RAT</name>
<proteinExistence type="evidence at transcript level"/>
<organism>
    <name type="scientific">Rattus norvegicus</name>
    <name type="common">Rat</name>
    <dbReference type="NCBI Taxonomy" id="10116"/>
    <lineage>
        <taxon>Eukaryota</taxon>
        <taxon>Metazoa</taxon>
        <taxon>Chordata</taxon>
        <taxon>Craniata</taxon>
        <taxon>Vertebrata</taxon>
        <taxon>Euteleostomi</taxon>
        <taxon>Mammalia</taxon>
        <taxon>Eutheria</taxon>
        <taxon>Euarchontoglires</taxon>
        <taxon>Glires</taxon>
        <taxon>Rodentia</taxon>
        <taxon>Myomorpha</taxon>
        <taxon>Muroidea</taxon>
        <taxon>Muridae</taxon>
        <taxon>Murinae</taxon>
        <taxon>Rattus</taxon>
    </lineage>
</organism>